<organism>
    <name type="scientific">Streptomyces coelicolor (strain ATCC BAA-471 / A3(2) / M145)</name>
    <dbReference type="NCBI Taxonomy" id="100226"/>
    <lineage>
        <taxon>Bacteria</taxon>
        <taxon>Bacillati</taxon>
        <taxon>Actinomycetota</taxon>
        <taxon>Actinomycetes</taxon>
        <taxon>Kitasatosporales</taxon>
        <taxon>Streptomycetaceae</taxon>
        <taxon>Streptomyces</taxon>
        <taxon>Streptomyces albidoflavus group</taxon>
    </lineage>
</organism>
<sequence length="250" mass="25511">MIDLNADLGEGFGRWTLTDDDALLSVVTSANVACGFHAGDPSVMRRVCDLAAERGVRIGAQVSYRDLAGFGRRAMDVPSDELAAEVAYQIGALRVFAEAAGAPVAYVKPHGALYNRTVHDEGQARAVVAGVRLAGGALPVLGLPGSRLLTAAAEAGLTGVPEAFADRAYTAEGSLVPRSEAGSVVTDEDAVVRRALAFAVEGSVEAVDGTAVAVAARSLCVHGDTPNAARIAARVREALETAGVGIGAFA</sequence>
<dbReference type="EC" id="3.5.2.9" evidence="1"/>
<dbReference type="EMBL" id="AL939105">
    <property type="protein sequence ID" value="CAB56671.1"/>
    <property type="molecule type" value="Genomic_DNA"/>
</dbReference>
<dbReference type="RefSeq" id="NP_624762.1">
    <property type="nucleotide sequence ID" value="NC_003888.3"/>
</dbReference>
<dbReference type="RefSeq" id="WP_011027118.1">
    <property type="nucleotide sequence ID" value="NZ_VNID01000015.1"/>
</dbReference>
<dbReference type="SMR" id="Q9RL45"/>
<dbReference type="STRING" id="100226.gene:17758024"/>
<dbReference type="PaxDb" id="100226-SCO0441"/>
<dbReference type="KEGG" id="sco:SCO0441"/>
<dbReference type="PATRIC" id="fig|100226.15.peg.418"/>
<dbReference type="eggNOG" id="COG1540">
    <property type="taxonomic scope" value="Bacteria"/>
</dbReference>
<dbReference type="HOGENOM" id="CLU_069535_0_0_11"/>
<dbReference type="InParanoid" id="Q9RL45"/>
<dbReference type="OrthoDB" id="9773478at2"/>
<dbReference type="PhylomeDB" id="Q9RL45"/>
<dbReference type="Proteomes" id="UP000001973">
    <property type="component" value="Chromosome"/>
</dbReference>
<dbReference type="GO" id="GO:0017168">
    <property type="term" value="F:5-oxoprolinase (ATP-hydrolyzing) activity"/>
    <property type="evidence" value="ECO:0007669"/>
    <property type="project" value="UniProtKB-UniRule"/>
</dbReference>
<dbReference type="GO" id="GO:0005524">
    <property type="term" value="F:ATP binding"/>
    <property type="evidence" value="ECO:0007669"/>
    <property type="project" value="UniProtKB-UniRule"/>
</dbReference>
<dbReference type="GO" id="GO:0005975">
    <property type="term" value="P:carbohydrate metabolic process"/>
    <property type="evidence" value="ECO:0007669"/>
    <property type="project" value="InterPro"/>
</dbReference>
<dbReference type="CDD" id="cd10787">
    <property type="entry name" value="LamB_YcsF_like"/>
    <property type="match status" value="1"/>
</dbReference>
<dbReference type="Gene3D" id="3.20.20.370">
    <property type="entry name" value="Glycoside hydrolase/deacetylase"/>
    <property type="match status" value="1"/>
</dbReference>
<dbReference type="HAMAP" id="MF_00691">
    <property type="entry name" value="PxpA"/>
    <property type="match status" value="1"/>
</dbReference>
<dbReference type="InterPro" id="IPR011330">
    <property type="entry name" value="Glyco_hydro/deAcase_b/a-brl"/>
</dbReference>
<dbReference type="InterPro" id="IPR005501">
    <property type="entry name" value="LamB/YcsF/PxpA-like"/>
</dbReference>
<dbReference type="NCBIfam" id="NF003814">
    <property type="entry name" value="PRK05406.1-3"/>
    <property type="match status" value="1"/>
</dbReference>
<dbReference type="NCBIfam" id="NF003816">
    <property type="entry name" value="PRK05406.1-5"/>
    <property type="match status" value="1"/>
</dbReference>
<dbReference type="PANTHER" id="PTHR30292:SF0">
    <property type="entry name" value="5-OXOPROLINASE SUBUNIT A"/>
    <property type="match status" value="1"/>
</dbReference>
<dbReference type="PANTHER" id="PTHR30292">
    <property type="entry name" value="UNCHARACTERIZED PROTEIN YBGL-RELATED"/>
    <property type="match status" value="1"/>
</dbReference>
<dbReference type="Pfam" id="PF03746">
    <property type="entry name" value="LamB_YcsF"/>
    <property type="match status" value="1"/>
</dbReference>
<dbReference type="SUPFAM" id="SSF88713">
    <property type="entry name" value="Glycoside hydrolase/deacetylase"/>
    <property type="match status" value="1"/>
</dbReference>
<comment type="function">
    <text evidence="1">Catalyzes the cleavage of 5-oxoproline to form L-glutamate coupled to the hydrolysis of ATP to ADP and inorganic phosphate.</text>
</comment>
<comment type="catalytic activity">
    <reaction evidence="1">
        <text>5-oxo-L-proline + ATP + 2 H2O = L-glutamate + ADP + phosphate + H(+)</text>
        <dbReference type="Rhea" id="RHEA:10348"/>
        <dbReference type="ChEBI" id="CHEBI:15377"/>
        <dbReference type="ChEBI" id="CHEBI:15378"/>
        <dbReference type="ChEBI" id="CHEBI:29985"/>
        <dbReference type="ChEBI" id="CHEBI:30616"/>
        <dbReference type="ChEBI" id="CHEBI:43474"/>
        <dbReference type="ChEBI" id="CHEBI:58402"/>
        <dbReference type="ChEBI" id="CHEBI:456216"/>
        <dbReference type="EC" id="3.5.2.9"/>
    </reaction>
</comment>
<comment type="subunit">
    <text evidence="1">Forms a complex composed of PxpA, PxpB and PxpC.</text>
</comment>
<comment type="similarity">
    <text evidence="1">Belongs to the LamB/PxpA family.</text>
</comment>
<keyword id="KW-0067">ATP-binding</keyword>
<keyword id="KW-0378">Hydrolase</keyword>
<keyword id="KW-0547">Nucleotide-binding</keyword>
<keyword id="KW-1185">Reference proteome</keyword>
<name>PXPA_STRCO</name>
<accession>Q9RL45</accession>
<proteinExistence type="inferred from homology"/>
<protein>
    <recommendedName>
        <fullName evidence="1">5-oxoprolinase subunit A</fullName>
        <shortName evidence="1">5-OPase subunit A</shortName>
        <ecNumber evidence="1">3.5.2.9</ecNumber>
    </recommendedName>
    <alternativeName>
        <fullName evidence="1">5-oxoprolinase (ATP-hydrolyzing) subunit A</fullName>
    </alternativeName>
</protein>
<gene>
    <name evidence="1" type="primary">pxpA</name>
    <name type="ordered locus">SCO0441</name>
    <name type="ORF">SCF51A.19</name>
</gene>
<reference key="1">
    <citation type="journal article" date="2002" name="Nature">
        <title>Complete genome sequence of the model actinomycete Streptomyces coelicolor A3(2).</title>
        <authorList>
            <person name="Bentley S.D."/>
            <person name="Chater K.F."/>
            <person name="Cerdeno-Tarraga A.-M."/>
            <person name="Challis G.L."/>
            <person name="Thomson N.R."/>
            <person name="James K.D."/>
            <person name="Harris D.E."/>
            <person name="Quail M.A."/>
            <person name="Kieser H."/>
            <person name="Harper D."/>
            <person name="Bateman A."/>
            <person name="Brown S."/>
            <person name="Chandra G."/>
            <person name="Chen C.W."/>
            <person name="Collins M."/>
            <person name="Cronin A."/>
            <person name="Fraser A."/>
            <person name="Goble A."/>
            <person name="Hidalgo J."/>
            <person name="Hornsby T."/>
            <person name="Howarth S."/>
            <person name="Huang C.-H."/>
            <person name="Kieser T."/>
            <person name="Larke L."/>
            <person name="Murphy L.D."/>
            <person name="Oliver K."/>
            <person name="O'Neil S."/>
            <person name="Rabbinowitsch E."/>
            <person name="Rajandream M.A."/>
            <person name="Rutherford K.M."/>
            <person name="Rutter S."/>
            <person name="Seeger K."/>
            <person name="Saunders D."/>
            <person name="Sharp S."/>
            <person name="Squares R."/>
            <person name="Squares S."/>
            <person name="Taylor K."/>
            <person name="Warren T."/>
            <person name="Wietzorrek A."/>
            <person name="Woodward J.R."/>
            <person name="Barrell B.G."/>
            <person name="Parkhill J."/>
            <person name="Hopwood D.A."/>
        </authorList>
    </citation>
    <scope>NUCLEOTIDE SEQUENCE [LARGE SCALE GENOMIC DNA]</scope>
    <source>
        <strain>ATCC BAA-471 / A3(2) / M145</strain>
    </source>
</reference>
<feature type="chain" id="PRO_0000185053" description="5-oxoprolinase subunit A">
    <location>
        <begin position="1"/>
        <end position="250"/>
    </location>
</feature>
<evidence type="ECO:0000255" key="1">
    <source>
        <dbReference type="HAMAP-Rule" id="MF_00691"/>
    </source>
</evidence>